<proteinExistence type="inferred from homology"/>
<evidence type="ECO:0000250" key="1"/>
<evidence type="ECO:0000256" key="2">
    <source>
        <dbReference type="SAM" id="MobiDB-lite"/>
    </source>
</evidence>
<evidence type="ECO:0000305" key="3"/>
<reference key="1">
    <citation type="journal article" date="2005" name="Genetics">
        <title>Sequence finishing and gene mapping for Candida albicans chromosome 7 and syntenic analysis against the Saccharomyces cerevisiae genome.</title>
        <authorList>
            <person name="Chibana H."/>
            <person name="Oka N."/>
            <person name="Nakayama H."/>
            <person name="Aoyama T."/>
            <person name="Magee B.B."/>
            <person name="Magee P.T."/>
            <person name="Mikami Y."/>
        </authorList>
    </citation>
    <scope>NUCLEOTIDE SEQUENCE [LARGE SCALE GENOMIC DNA]</scope>
    <source>
        <strain>SC5314 / ATCC MYA-2876</strain>
    </source>
</reference>
<reference key="2">
    <citation type="journal article" date="2004" name="Proc. Natl. Acad. Sci. U.S.A.">
        <title>The diploid genome sequence of Candida albicans.</title>
        <authorList>
            <person name="Jones T."/>
            <person name="Federspiel N.A."/>
            <person name="Chibana H."/>
            <person name="Dungan J."/>
            <person name="Kalman S."/>
            <person name="Magee B.B."/>
            <person name="Newport G."/>
            <person name="Thorstenson Y.R."/>
            <person name="Agabian N."/>
            <person name="Magee P.T."/>
            <person name="Davis R.W."/>
            <person name="Scherer S."/>
        </authorList>
    </citation>
    <scope>NUCLEOTIDE SEQUENCE [LARGE SCALE GENOMIC DNA]</scope>
    <source>
        <strain>SC5314 / ATCC MYA-2876</strain>
    </source>
</reference>
<reference key="3">
    <citation type="journal article" date="2007" name="Genome Biol.">
        <title>Assembly of the Candida albicans genome into sixteen supercontigs aligned on the eight chromosomes.</title>
        <authorList>
            <person name="van het Hoog M."/>
            <person name="Rast T.J."/>
            <person name="Martchenko M."/>
            <person name="Grindle S."/>
            <person name="Dignard D."/>
            <person name="Hogues H."/>
            <person name="Cuomo C."/>
            <person name="Berriman M."/>
            <person name="Scherer S."/>
            <person name="Magee B.B."/>
            <person name="Whiteway M."/>
            <person name="Chibana H."/>
            <person name="Nantel A."/>
            <person name="Magee P.T."/>
        </authorList>
    </citation>
    <scope>GENOME REANNOTATION</scope>
    <source>
        <strain>SC5314 / ATCC MYA-2876</strain>
    </source>
</reference>
<reference key="4">
    <citation type="journal article" date="2013" name="Genome Biol.">
        <title>Assembly of a phased diploid Candida albicans genome facilitates allele-specific measurements and provides a simple model for repeat and indel structure.</title>
        <authorList>
            <person name="Muzzey D."/>
            <person name="Schwartz K."/>
            <person name="Weissman J.S."/>
            <person name="Sherlock G."/>
        </authorList>
    </citation>
    <scope>NUCLEOTIDE SEQUENCE [LARGE SCALE GENOMIC DNA]</scope>
    <scope>GENOME REANNOTATION</scope>
    <source>
        <strain>SC5314 / ATCC MYA-2876</strain>
    </source>
</reference>
<protein>
    <recommendedName>
        <fullName>RuvB-like helicase 2</fullName>
        <ecNumber>3.6.4.12</ecNumber>
    </recommendedName>
</protein>
<comment type="function">
    <text evidence="1">DNA helicase which participates in several chromatin remodeling complexes, including the SWR1 and the INO80 complexes. The SWR1 complex mediates the ATP-dependent exchange of histone H2A for the H2A variant HZT1 leading to transcriptional regulation of selected genes by chromatin remodeling. The INO80 complex remodels chromatin by shifting nucleosomes and is involved in DNA repair. Also involved in pre-rRNA processing (By similarity).</text>
</comment>
<comment type="catalytic activity">
    <reaction>
        <text>ATP + H2O = ADP + phosphate + H(+)</text>
        <dbReference type="Rhea" id="RHEA:13065"/>
        <dbReference type="ChEBI" id="CHEBI:15377"/>
        <dbReference type="ChEBI" id="CHEBI:15378"/>
        <dbReference type="ChEBI" id="CHEBI:30616"/>
        <dbReference type="ChEBI" id="CHEBI:43474"/>
        <dbReference type="ChEBI" id="CHEBI:456216"/>
        <dbReference type="EC" id="3.6.4.12"/>
    </reaction>
</comment>
<comment type="subunit">
    <text evidence="1">May form heterododecamers with RVB1. Component of the SWR1 chromatin remodeling complex, the INO80 chromatin remodeling complex, and of the R2TP complex (By similarity).</text>
</comment>
<comment type="subcellular location">
    <subcellularLocation>
        <location evidence="1">Nucleus</location>
    </subcellularLocation>
</comment>
<comment type="similarity">
    <text evidence="3">Belongs to the RuvB family.</text>
</comment>
<keyword id="KW-0010">Activator</keyword>
<keyword id="KW-0067">ATP-binding</keyword>
<keyword id="KW-0156">Chromatin regulator</keyword>
<keyword id="KW-0227">DNA damage</keyword>
<keyword id="KW-0234">DNA repair</keyword>
<keyword id="KW-0347">Helicase</keyword>
<keyword id="KW-0378">Hydrolase</keyword>
<keyword id="KW-0547">Nucleotide-binding</keyword>
<keyword id="KW-0539">Nucleus</keyword>
<keyword id="KW-1185">Reference proteome</keyword>
<keyword id="KW-0698">rRNA processing</keyword>
<keyword id="KW-0804">Transcription</keyword>
<keyword id="KW-0805">Transcription regulation</keyword>
<gene>
    <name type="primary">RVB2</name>
    <name type="ordered locus">CAALFM_C701810WA</name>
    <name type="ORF">CaJ7.0208</name>
    <name type="ORF">CaO19.13892</name>
    <name type="ORF">CaO19.6539</name>
</gene>
<accession>Q5AGZ9</accession>
<accession>A0A1D8PR03</accession>
<accession>Q3MPG1</accession>
<dbReference type="EC" id="3.6.4.12"/>
<dbReference type="EMBL" id="AP006852">
    <property type="protein sequence ID" value="BAE44699.1"/>
    <property type="molecule type" value="Genomic_DNA"/>
</dbReference>
<dbReference type="EMBL" id="CP017629">
    <property type="protein sequence ID" value="AOW30546.1"/>
    <property type="molecule type" value="Genomic_DNA"/>
</dbReference>
<dbReference type="RefSeq" id="XP_721377.1">
    <property type="nucleotide sequence ID" value="XM_716284.1"/>
</dbReference>
<dbReference type="SMR" id="Q5AGZ9"/>
<dbReference type="BioGRID" id="1220149">
    <property type="interactions" value="1"/>
</dbReference>
<dbReference type="FunCoup" id="Q5AGZ9">
    <property type="interactions" value="1624"/>
</dbReference>
<dbReference type="STRING" id="237561.Q5AGZ9"/>
<dbReference type="EnsemblFungi" id="C7_01810W_A-T">
    <property type="protein sequence ID" value="C7_01810W_A-T-p1"/>
    <property type="gene ID" value="C7_01810W_A"/>
</dbReference>
<dbReference type="GeneID" id="3637055"/>
<dbReference type="KEGG" id="cal:CAALFM_C701810WA"/>
<dbReference type="CGD" id="CAL0000176498">
    <property type="gene designation" value="RVB2"/>
</dbReference>
<dbReference type="VEuPathDB" id="FungiDB:C7_01810W_A"/>
<dbReference type="eggNOG" id="KOG2680">
    <property type="taxonomic scope" value="Eukaryota"/>
</dbReference>
<dbReference type="HOGENOM" id="CLU_028311_4_0_1"/>
<dbReference type="InParanoid" id="Q5AGZ9"/>
<dbReference type="OMA" id="IINTEPY"/>
<dbReference type="OrthoDB" id="10060499at2759"/>
<dbReference type="Proteomes" id="UP000000559">
    <property type="component" value="Chromosome 7"/>
</dbReference>
<dbReference type="GO" id="GO:0031011">
    <property type="term" value="C:Ino80 complex"/>
    <property type="evidence" value="ECO:0000318"/>
    <property type="project" value="GO_Central"/>
</dbReference>
<dbReference type="GO" id="GO:0035267">
    <property type="term" value="C:NuA4 histone acetyltransferase complex"/>
    <property type="evidence" value="ECO:0000318"/>
    <property type="project" value="GO_Central"/>
</dbReference>
<dbReference type="GO" id="GO:0097255">
    <property type="term" value="C:R2TP complex"/>
    <property type="evidence" value="ECO:0000318"/>
    <property type="project" value="GO_Central"/>
</dbReference>
<dbReference type="GO" id="GO:0000812">
    <property type="term" value="C:Swr1 complex"/>
    <property type="evidence" value="ECO:0000318"/>
    <property type="project" value="GO_Central"/>
</dbReference>
<dbReference type="GO" id="GO:0043138">
    <property type="term" value="F:3'-5' DNA helicase activity"/>
    <property type="evidence" value="ECO:0007669"/>
    <property type="project" value="EnsemblFungi"/>
</dbReference>
<dbReference type="GO" id="GO:0043139">
    <property type="term" value="F:5'-3' DNA helicase activity"/>
    <property type="evidence" value="ECO:0007669"/>
    <property type="project" value="EnsemblFungi"/>
</dbReference>
<dbReference type="GO" id="GO:0005524">
    <property type="term" value="F:ATP binding"/>
    <property type="evidence" value="ECO:0007669"/>
    <property type="project" value="UniProtKB-KW"/>
</dbReference>
<dbReference type="GO" id="GO:0016887">
    <property type="term" value="F:ATP hydrolysis activity"/>
    <property type="evidence" value="ECO:0007669"/>
    <property type="project" value="InterPro"/>
</dbReference>
<dbReference type="GO" id="GO:0003678">
    <property type="term" value="F:DNA helicase activity"/>
    <property type="evidence" value="ECO:0000318"/>
    <property type="project" value="GO_Central"/>
</dbReference>
<dbReference type="GO" id="GO:0000492">
    <property type="term" value="P:box C/D snoRNP assembly"/>
    <property type="evidence" value="ECO:0000318"/>
    <property type="project" value="GO_Central"/>
</dbReference>
<dbReference type="GO" id="GO:0006338">
    <property type="term" value="P:chromatin remodeling"/>
    <property type="evidence" value="ECO:0000318"/>
    <property type="project" value="GO_Central"/>
</dbReference>
<dbReference type="GO" id="GO:0006281">
    <property type="term" value="P:DNA repair"/>
    <property type="evidence" value="ECO:0007669"/>
    <property type="project" value="UniProtKB-KW"/>
</dbReference>
<dbReference type="GO" id="GO:0006357">
    <property type="term" value="P:regulation of transcription by RNA polymerase II"/>
    <property type="evidence" value="ECO:0000318"/>
    <property type="project" value="GO_Central"/>
</dbReference>
<dbReference type="GO" id="GO:0006364">
    <property type="term" value="P:rRNA processing"/>
    <property type="evidence" value="ECO:0007669"/>
    <property type="project" value="UniProtKB-KW"/>
</dbReference>
<dbReference type="FunFam" id="3.40.50.300:FF:002221">
    <property type="entry name" value="RuvB-like 2"/>
    <property type="match status" value="2"/>
</dbReference>
<dbReference type="FunFam" id="1.10.8.60:FF:000010">
    <property type="entry name" value="RuvB-like helicase"/>
    <property type="match status" value="1"/>
</dbReference>
<dbReference type="FunFam" id="2.40.50.360:FF:000002">
    <property type="entry name" value="RuvB-like helicase"/>
    <property type="match status" value="1"/>
</dbReference>
<dbReference type="Gene3D" id="1.10.8.60">
    <property type="match status" value="1"/>
</dbReference>
<dbReference type="Gene3D" id="3.40.50.300">
    <property type="entry name" value="P-loop containing nucleotide triphosphate hydrolases"/>
    <property type="match status" value="1"/>
</dbReference>
<dbReference type="Gene3D" id="2.40.50.360">
    <property type="entry name" value="RuvB-like helicase, domain II"/>
    <property type="match status" value="1"/>
</dbReference>
<dbReference type="InterPro" id="IPR003593">
    <property type="entry name" value="AAA+_ATPase"/>
</dbReference>
<dbReference type="InterPro" id="IPR027417">
    <property type="entry name" value="P-loop_NTPase"/>
</dbReference>
<dbReference type="InterPro" id="IPR027238">
    <property type="entry name" value="RuvB-like"/>
</dbReference>
<dbReference type="InterPro" id="IPR041048">
    <property type="entry name" value="RuvB-like_C"/>
</dbReference>
<dbReference type="InterPro" id="IPR042487">
    <property type="entry name" value="RuvBL1/2_DNA/RNA_bd_dom"/>
</dbReference>
<dbReference type="InterPro" id="IPR010339">
    <property type="entry name" value="TIP49_P-loop"/>
</dbReference>
<dbReference type="PANTHER" id="PTHR11093">
    <property type="entry name" value="RUVB-RELATED REPTIN AND PONTIN"/>
    <property type="match status" value="1"/>
</dbReference>
<dbReference type="Pfam" id="PF06068">
    <property type="entry name" value="TIP49"/>
    <property type="match status" value="1"/>
</dbReference>
<dbReference type="Pfam" id="PF17856">
    <property type="entry name" value="TIP49_C"/>
    <property type="match status" value="1"/>
</dbReference>
<dbReference type="SMART" id="SM00382">
    <property type="entry name" value="AAA"/>
    <property type="match status" value="1"/>
</dbReference>
<dbReference type="SUPFAM" id="SSF52540">
    <property type="entry name" value="P-loop containing nucleoside triphosphate hydrolases"/>
    <property type="match status" value="1"/>
</dbReference>
<organism>
    <name type="scientific">Candida albicans (strain SC5314 / ATCC MYA-2876)</name>
    <name type="common">Yeast</name>
    <dbReference type="NCBI Taxonomy" id="237561"/>
    <lineage>
        <taxon>Eukaryota</taxon>
        <taxon>Fungi</taxon>
        <taxon>Dikarya</taxon>
        <taxon>Ascomycota</taxon>
        <taxon>Saccharomycotina</taxon>
        <taxon>Pichiomycetes</taxon>
        <taxon>Debaryomycetaceae</taxon>
        <taxon>Candida/Lodderomyces clade</taxon>
        <taxon>Candida</taxon>
    </lineage>
</organism>
<sequence>MATNTITTTKVTTTTTDVTGLSLIAAHSHISGLGLDDNLQPKENAQGMVGQLSARKAAGVILKMVEAGKIAGRAVLIAGPPSTGKTAIAMGLSQSLGNQVPFTALAASEVFSLELSKTEALTQAFRKSIGIKIKEETEIIEGEVVEIQIDRTITGGHKQGKLTIKTTDMETIYELGNKMIEGLTKEKVLAGDVISIDKASGKITKLGRSFTRARDYDAMGPETKFVQCPEGELQKRKEVVHTISLHEIDVINSRQQGFLALFSGDTGEIRPEVRDQINTKVAEWKEEGKAEIVPGVLFIDEVHMLDIECFSFINRALEDEFSPIVIMATNRGVSRIRGTDYKSPHGMPMDLLDRSITIHTTSYTADEIRTILSIRATEEEVELSGDALALLTKIGQETSLRYAANLISVSQQIALKKKNNTVDLQDIKRAYMLFLDSDRSVQYLEENADQYIDDYGRVTIGQESTDGSTQPQAKQQEVAQPEATQPQSQPEDDKMETD</sequence>
<feature type="chain" id="PRO_0000165664" description="RuvB-like helicase 2">
    <location>
        <begin position="1"/>
        <end position="498"/>
    </location>
</feature>
<feature type="region of interest" description="Disordered" evidence="2">
    <location>
        <begin position="458"/>
        <end position="498"/>
    </location>
</feature>
<feature type="compositionally biased region" description="Polar residues" evidence="2">
    <location>
        <begin position="461"/>
        <end position="489"/>
    </location>
</feature>
<feature type="binding site" evidence="1">
    <location>
        <begin position="79"/>
        <end position="86"/>
    </location>
    <ligand>
        <name>ATP</name>
        <dbReference type="ChEBI" id="CHEBI:30616"/>
    </ligand>
</feature>
<name>RUVB2_CANAL</name>